<comment type="function">
    <text evidence="1">Plasmin dissolves the fibrin of blood clots and acts as a proteolytic factor in a variety of other processes including embryonic development, tissue remodeling, tumor invasion, and inflammation. In ovulation, weakens the walls of the Graafian follicle. It activates the urokinase-type plasminogen activator, collagenases and several complement zymogens, such as C1, C4 and C5. Cleavage of fibronectin and laminin leads to cell detachment and apoptosis. Also cleaves fibrin, thrombospondin and von Willebrand factor. Its role in tissue remodeling and tumor invasion may be modulated by CSPG4. Binds to cells (By similarity).</text>
</comment>
<comment type="catalytic activity">
    <reaction>
        <text>Preferential cleavage: Lys-|-Xaa &gt; Arg-|-Xaa, higher selectivity than trypsin. Converts fibrin into soluble products.</text>
        <dbReference type="EC" id="3.4.21.7"/>
    </reaction>
</comment>
<comment type="activity regulation">
    <text>Converted into plasmin by plasminogen activators, both plasminogen and its activator being bound to fibrin. Cannot be activated with streptokinase.</text>
</comment>
<comment type="subunit">
    <text evidence="2">Interacts with CSPG4 and AMOT. Interacts (via the Kringle domains) with HRG; the interaction tethers PLG to the cell surface and enhances its activation. Interacts (via Kringle 4 domain) with ADA; the interaction stimulates PLG activation when in complex with DPP4. Angiostatin: Interacts with ATP5F1A; the interaction inhibits most of the angiogenic effects of angiostatin.</text>
</comment>
<comment type="subcellular location">
    <subcellularLocation>
        <location evidence="1">Secreted</location>
    </subcellularLocation>
    <text evidence="1">Locates to the cell surface where it is proteolytically cleaved to produce the active plasmin. Interaction with HRG tethers it to the cell surface (By similarity).</text>
</comment>
<comment type="domain">
    <text evidence="1">Kringle domains mediate interaction with CSPG4.</text>
</comment>
<comment type="miscellaneous">
    <text>Plasmin is inactivated by alpha-2-antiplasmin immediately after dissociation from the clot.</text>
</comment>
<comment type="similarity">
    <text evidence="4">Belongs to the peptidase S1 family. Plasminogen subfamily.</text>
</comment>
<evidence type="ECO:0000250" key="1"/>
<evidence type="ECO:0000250" key="2">
    <source>
        <dbReference type="UniProtKB" id="P00747"/>
    </source>
</evidence>
<evidence type="ECO:0000255" key="3">
    <source>
        <dbReference type="PROSITE-ProRule" id="PRU00121"/>
    </source>
</evidence>
<evidence type="ECO:0000255" key="4">
    <source>
        <dbReference type="PROSITE-ProRule" id="PRU00274"/>
    </source>
</evidence>
<gene>
    <name type="primary">PLG</name>
</gene>
<keyword id="KW-0094">Blood coagulation</keyword>
<keyword id="KW-0903">Direct protein sequencing</keyword>
<keyword id="KW-1015">Disulfide bond</keyword>
<keyword id="KW-0280">Fibrinolysis</keyword>
<keyword id="KW-0356">Hemostasis</keyword>
<keyword id="KW-0378">Hydrolase</keyword>
<keyword id="KW-0420">Kringle</keyword>
<keyword id="KW-0597">Phosphoprotein</keyword>
<keyword id="KW-0645">Protease</keyword>
<keyword id="KW-1185">Reference proteome</keyword>
<keyword id="KW-0677">Repeat</keyword>
<keyword id="KW-0964">Secreted</keyword>
<keyword id="KW-0720">Serine protease</keyword>
<keyword id="KW-0797">Tissue remodeling</keyword>
<keyword id="KW-0865">Zymogen</keyword>
<accession>P81286</accession>
<organism>
    <name type="scientific">Ovis aries</name>
    <name type="common">Sheep</name>
    <dbReference type="NCBI Taxonomy" id="9940"/>
    <lineage>
        <taxon>Eukaryota</taxon>
        <taxon>Metazoa</taxon>
        <taxon>Chordata</taxon>
        <taxon>Craniata</taxon>
        <taxon>Vertebrata</taxon>
        <taxon>Euteleostomi</taxon>
        <taxon>Mammalia</taxon>
        <taxon>Eutheria</taxon>
        <taxon>Laurasiatheria</taxon>
        <taxon>Artiodactyla</taxon>
        <taxon>Ruminantia</taxon>
        <taxon>Pecora</taxon>
        <taxon>Bovidae</taxon>
        <taxon>Caprinae</taxon>
        <taxon>Ovis</taxon>
    </lineage>
</organism>
<reference key="1">
    <citation type="journal article" date="1992" name="Protein Seq. Data Anal.">
        <title>Complete amino acid sequence of ovine miniplasminogen.</title>
        <authorList>
            <person name="Schaller J."/>
            <person name="Straub C."/>
            <person name="Kampfer U."/>
            <person name="Rickli E.E."/>
        </authorList>
    </citation>
    <scope>PROTEIN SEQUENCE</scope>
</reference>
<name>PLMN_SHEEP</name>
<feature type="chain" id="PRO_0000088704" description="Plasminogen">
    <location>
        <begin position="1" status="less than"/>
        <end position="343" status="greater than"/>
    </location>
</feature>
<feature type="domain" description="Kringle 4" evidence="3">
    <location>
        <begin position="1" status="less than"/>
        <end position="17"/>
    </location>
</feature>
<feature type="domain" description="Kringle 5" evidence="3">
    <location>
        <begin position="41"/>
        <end position="120"/>
    </location>
</feature>
<feature type="domain" description="Peptidase S1" evidence="4">
    <location>
        <begin position="114"/>
        <end position="341"/>
    </location>
</feature>
<feature type="region of interest" description="Plasmin heavy chain A">
    <location>
        <begin position="1" status="less than"/>
        <end position="140"/>
    </location>
</feature>
<feature type="region of interest" description="Plasmin light chain B">
    <location>
        <begin position="141"/>
        <end position="343" status="greater than"/>
    </location>
</feature>
<feature type="active site" description="Charge relay system" evidence="1">
    <location>
        <position position="155"/>
    </location>
</feature>
<feature type="active site" description="Charge relay system" evidence="1">
    <location>
        <position position="198"/>
    </location>
</feature>
<feature type="active site" description="Charge relay system" evidence="1">
    <location>
        <position position="293"/>
    </location>
</feature>
<feature type="modified residue" description="Phosphoserine" evidence="2">
    <location>
        <position position="130"/>
    </location>
</feature>
<feature type="modified residue" description="Phosphoserine" evidence="2">
    <location>
        <position position="221"/>
    </location>
</feature>
<feature type="disulfide bond" evidence="1">
    <location>
        <begin position="15"/>
        <end position="94"/>
    </location>
</feature>
<feature type="disulfide bond" evidence="1">
    <location>
        <begin position="36"/>
        <end position="77"/>
    </location>
</feature>
<feature type="disulfide bond" evidence="1">
    <location>
        <begin position="65"/>
        <end position="89"/>
    </location>
</feature>
<feature type="disulfide bond" evidence="1">
    <location>
        <begin position="140"/>
        <end position="156"/>
    </location>
</feature>
<feature type="disulfide bond" evidence="1">
    <location>
        <begin position="232"/>
        <end position="299"/>
    </location>
</feature>
<feature type="disulfide bond" evidence="1">
    <location>
        <begin position="262"/>
        <end position="278"/>
    </location>
</feature>
<feature type="disulfide bond" evidence="1">
    <location>
        <begin position="289"/>
        <end position="317"/>
    </location>
</feature>
<feature type="non-terminal residue">
    <location>
        <position position="1"/>
    </location>
</feature>
<feature type="non-terminal residue">
    <location>
        <position position="343"/>
    </location>
</feature>
<dbReference type="EC" id="3.4.21.7"/>
<dbReference type="PIR" id="B61545">
    <property type="entry name" value="B61545"/>
</dbReference>
<dbReference type="SMR" id="P81286"/>
<dbReference type="STRING" id="9940.ENSOARP00000005065"/>
<dbReference type="MEROPS" id="S01.233"/>
<dbReference type="PaxDb" id="9940-ENSOARP00000005065"/>
<dbReference type="eggNOG" id="ENOG502QVNP">
    <property type="taxonomic scope" value="Eukaryota"/>
</dbReference>
<dbReference type="Proteomes" id="UP000002356">
    <property type="component" value="Unplaced"/>
</dbReference>
<dbReference type="GO" id="GO:0005615">
    <property type="term" value="C:extracellular space"/>
    <property type="evidence" value="ECO:0007669"/>
    <property type="project" value="TreeGrafter"/>
</dbReference>
<dbReference type="GO" id="GO:0004252">
    <property type="term" value="F:serine-type endopeptidase activity"/>
    <property type="evidence" value="ECO:0007669"/>
    <property type="project" value="UniProtKB-EC"/>
</dbReference>
<dbReference type="GO" id="GO:0007596">
    <property type="term" value="P:blood coagulation"/>
    <property type="evidence" value="ECO:0007669"/>
    <property type="project" value="UniProtKB-KW"/>
</dbReference>
<dbReference type="GO" id="GO:0042730">
    <property type="term" value="P:fibrinolysis"/>
    <property type="evidence" value="ECO:0007669"/>
    <property type="project" value="UniProtKB-KW"/>
</dbReference>
<dbReference type="GO" id="GO:0006508">
    <property type="term" value="P:proteolysis"/>
    <property type="evidence" value="ECO:0007669"/>
    <property type="project" value="UniProtKB-KW"/>
</dbReference>
<dbReference type="GO" id="GO:0048771">
    <property type="term" value="P:tissue remodeling"/>
    <property type="evidence" value="ECO:0007669"/>
    <property type="project" value="UniProtKB-KW"/>
</dbReference>
<dbReference type="CDD" id="cd00108">
    <property type="entry name" value="KR"/>
    <property type="match status" value="1"/>
</dbReference>
<dbReference type="CDD" id="cd00190">
    <property type="entry name" value="Tryp_SPc"/>
    <property type="match status" value="1"/>
</dbReference>
<dbReference type="FunFam" id="2.40.20.10:FF:000014">
    <property type="entry name" value="Plasminogen"/>
    <property type="match status" value="1"/>
</dbReference>
<dbReference type="FunFam" id="2.40.10.10:FF:000003">
    <property type="entry name" value="Transmembrane serine protease 3"/>
    <property type="match status" value="1"/>
</dbReference>
<dbReference type="Gene3D" id="2.40.20.10">
    <property type="entry name" value="Plasminogen Kringle 4"/>
    <property type="match status" value="1"/>
</dbReference>
<dbReference type="Gene3D" id="2.40.10.10">
    <property type="entry name" value="Trypsin-like serine proteases"/>
    <property type="match status" value="1"/>
</dbReference>
<dbReference type="InterPro" id="IPR000001">
    <property type="entry name" value="Kringle"/>
</dbReference>
<dbReference type="InterPro" id="IPR013806">
    <property type="entry name" value="Kringle-like"/>
</dbReference>
<dbReference type="InterPro" id="IPR018056">
    <property type="entry name" value="Kringle_CS"/>
</dbReference>
<dbReference type="InterPro" id="IPR038178">
    <property type="entry name" value="Kringle_sf"/>
</dbReference>
<dbReference type="InterPro" id="IPR009003">
    <property type="entry name" value="Peptidase_S1_PA"/>
</dbReference>
<dbReference type="InterPro" id="IPR043504">
    <property type="entry name" value="Peptidase_S1_PA_chymotrypsin"/>
</dbReference>
<dbReference type="InterPro" id="IPR001314">
    <property type="entry name" value="Peptidase_S1A"/>
</dbReference>
<dbReference type="InterPro" id="IPR050127">
    <property type="entry name" value="Serine_Proteases_S1"/>
</dbReference>
<dbReference type="InterPro" id="IPR001254">
    <property type="entry name" value="Trypsin_dom"/>
</dbReference>
<dbReference type="InterPro" id="IPR018114">
    <property type="entry name" value="TRYPSIN_HIS"/>
</dbReference>
<dbReference type="InterPro" id="IPR033116">
    <property type="entry name" value="TRYPSIN_SER"/>
</dbReference>
<dbReference type="PANTHER" id="PTHR24264:SF83">
    <property type="entry name" value="COMPLEMENT FACTOR I"/>
    <property type="match status" value="1"/>
</dbReference>
<dbReference type="PANTHER" id="PTHR24264">
    <property type="entry name" value="TRYPSIN-RELATED"/>
    <property type="match status" value="1"/>
</dbReference>
<dbReference type="Pfam" id="PF00051">
    <property type="entry name" value="Kringle"/>
    <property type="match status" value="1"/>
</dbReference>
<dbReference type="Pfam" id="PF00089">
    <property type="entry name" value="Trypsin"/>
    <property type="match status" value="1"/>
</dbReference>
<dbReference type="PRINTS" id="PR00722">
    <property type="entry name" value="CHYMOTRYPSIN"/>
</dbReference>
<dbReference type="PRINTS" id="PR00018">
    <property type="entry name" value="KRINGLE"/>
</dbReference>
<dbReference type="SMART" id="SM00130">
    <property type="entry name" value="KR"/>
    <property type="match status" value="1"/>
</dbReference>
<dbReference type="SMART" id="SM00020">
    <property type="entry name" value="Tryp_SPc"/>
    <property type="match status" value="1"/>
</dbReference>
<dbReference type="SUPFAM" id="SSF57440">
    <property type="entry name" value="Kringle-like"/>
    <property type="match status" value="1"/>
</dbReference>
<dbReference type="SUPFAM" id="SSF50494">
    <property type="entry name" value="Trypsin-like serine proteases"/>
    <property type="match status" value="1"/>
</dbReference>
<dbReference type="PROSITE" id="PS00021">
    <property type="entry name" value="KRINGLE_1"/>
    <property type="match status" value="1"/>
</dbReference>
<dbReference type="PROSITE" id="PS50070">
    <property type="entry name" value="KRINGLE_2"/>
    <property type="match status" value="1"/>
</dbReference>
<dbReference type="PROSITE" id="PS50240">
    <property type="entry name" value="TRYPSIN_DOM"/>
    <property type="match status" value="1"/>
</dbReference>
<dbReference type="PROSITE" id="PS00134">
    <property type="entry name" value="TRYPSIN_HIS"/>
    <property type="match status" value="1"/>
</dbReference>
<dbReference type="PROSITE" id="PS00135">
    <property type="entry name" value="TRYPSIN_SER"/>
    <property type="match status" value="1"/>
</dbReference>
<protein>
    <recommendedName>
        <fullName>Plasminogen</fullName>
        <ecNumber>3.4.21.7</ecNumber>
    </recommendedName>
</protein>
<proteinExistence type="evidence at protein level"/>
<sequence length="343" mass="37662">APQAPSVENPPEADCMLGIGKGYRGKKATTVAGVPCQEWAAQEPHRHGIFTPETNPRAGLEKNYCRNPDGDVNGPWCYTTNPRKLFDYCDIPQCESSFDCGKPKVEPKKCPARVVGGCVATPHSWPWQVSLRRRSREHFCGGTLISPEWVLTAAHCLDSILGPSFYTVILGAHYEMAREASVQEIPVSRLFLEPSRADIALLKLSSPAVITDEVIPACLPSPNYVVADKTVCYITGWGETQGTFGVGRLKEARLPVIENKVCNRYEYLNGRVKSTELCAGDLAGGTDSCQGDSGGPLVCFEKDKYILQGVTSWGLGCARPNKPGVYVRVSTYVPWIEETMRRY</sequence>